<evidence type="ECO:0000255" key="1">
    <source>
        <dbReference type="PROSITE-ProRule" id="PRU00434"/>
    </source>
</evidence>
<evidence type="ECO:0000305" key="2"/>
<organism>
    <name type="scientific">Dickeya dadantii (strain 3937)</name>
    <name type="common">Erwinia chrysanthemi (strain 3937)</name>
    <dbReference type="NCBI Taxonomy" id="198628"/>
    <lineage>
        <taxon>Bacteria</taxon>
        <taxon>Pseudomonadati</taxon>
        <taxon>Pseudomonadota</taxon>
        <taxon>Gammaproteobacteria</taxon>
        <taxon>Enterobacterales</taxon>
        <taxon>Pectobacteriaceae</taxon>
        <taxon>Dickeya</taxon>
    </lineage>
</organism>
<accession>Q47087</accession>
<accession>E0SIF9</accession>
<proteinExistence type="inferred from homology"/>
<reference key="1">
    <citation type="journal article" date="1995" name="Mol. Microbiol.">
        <title>Differential expression of two siderophore-dependent iron-acquisition pathways in Erwinia chrysanthemi 3937: characterization of a novel ferrisiderophore permease of the ABC transporter family.</title>
        <authorList>
            <person name="Mahe B."/>
            <person name="Masclaux C."/>
            <person name="Rauscher L."/>
            <person name="Enard C."/>
            <person name="Expert D."/>
        </authorList>
    </citation>
    <scope>NUCLEOTIDE SEQUENCE [GENOMIC DNA]</scope>
    <source>
        <strain>3937</strain>
    </source>
</reference>
<reference key="2">
    <citation type="journal article" date="2011" name="J. Bacteriol.">
        <title>Genome sequence of the plant-pathogenic bacterium Dickeya dadantii 3937.</title>
        <authorList>
            <person name="Glasner J.D."/>
            <person name="Yang C.H."/>
            <person name="Reverchon S."/>
            <person name="Hugouvieux-Cotte-Pattat N."/>
            <person name="Condemine G."/>
            <person name="Bohin J.P."/>
            <person name="Van Gijsegem F."/>
            <person name="Yang S."/>
            <person name="Franza T."/>
            <person name="Expert D."/>
            <person name="Plunkett G. III"/>
            <person name="San Francisco M.J."/>
            <person name="Charkowski A.O."/>
            <person name="Py B."/>
            <person name="Bell K."/>
            <person name="Rauscher L."/>
            <person name="Rodriguez-Palenzuela P."/>
            <person name="Toussaint A."/>
            <person name="Holeva M.C."/>
            <person name="He S.Y."/>
            <person name="Douet V."/>
            <person name="Boccara M."/>
            <person name="Blanco C."/>
            <person name="Toth I."/>
            <person name="Anderson B.D."/>
            <person name="Biehl B.S."/>
            <person name="Mau B."/>
            <person name="Flynn S.M."/>
            <person name="Barras F."/>
            <person name="Lindeberg M."/>
            <person name="Birch P.R."/>
            <person name="Tsuyumu S."/>
            <person name="Shi X."/>
            <person name="Hibbing M."/>
            <person name="Yap M.N."/>
            <person name="Carpentier M."/>
            <person name="Dassa E."/>
            <person name="Umehara M."/>
            <person name="Kim J.F."/>
            <person name="Rusch M."/>
            <person name="Soni P."/>
            <person name="Mayhew G.F."/>
            <person name="Fouts D.E."/>
            <person name="Gill S.R."/>
            <person name="Blattner F.R."/>
            <person name="Keen N.T."/>
            <person name="Perna N.T."/>
        </authorList>
    </citation>
    <scope>NUCLEOTIDE SEQUENCE [LARGE SCALE GENOMIC DNA]</scope>
    <source>
        <strain>3937</strain>
    </source>
</reference>
<protein>
    <recommendedName>
        <fullName>Achromobactin transport ATP-binding protein CbrD</fullName>
    </recommendedName>
</protein>
<feature type="chain" id="PRO_0000092164" description="Achromobactin transport ATP-binding protein CbrD">
    <location>
        <begin position="1"/>
        <end position="269"/>
    </location>
</feature>
<feature type="domain" description="ABC transporter" evidence="1">
    <location>
        <begin position="4"/>
        <end position="240"/>
    </location>
</feature>
<feature type="binding site" evidence="1">
    <location>
        <begin position="36"/>
        <end position="43"/>
    </location>
    <ligand>
        <name>ATP</name>
        <dbReference type="ChEBI" id="CHEBI:30616"/>
    </ligand>
</feature>
<feature type="sequence conflict" description="In Ref. 1; CAA60669." evidence="2" ref="1">
    <original>K</original>
    <variation>E</variation>
    <location>
        <position position="28"/>
    </location>
</feature>
<feature type="sequence conflict" description="In Ref. 1; CAA60669." evidence="2" ref="1">
    <original>C</original>
    <variation>S</variation>
    <location>
        <position position="40"/>
    </location>
</feature>
<feature type="sequence conflict" description="In Ref. 1; CAA60669." evidence="2" ref="1">
    <original>A</original>
    <variation>G</variation>
    <location>
        <position position="155"/>
    </location>
</feature>
<feature type="sequence conflict" description="In Ref. 1; CAA60669." evidence="2" ref="1">
    <original>A</original>
    <variation>G</variation>
    <location>
        <position position="207"/>
    </location>
</feature>
<feature type="sequence conflict" description="In Ref. 1; CAA60669." evidence="2" ref="1">
    <original>DPFFHTPLCIPFGREKPQERATVA</original>
    <variation>TRFSTRHCVFRSGARNHRRGRRWHKSAG</variation>
    <location>
        <begin position="246"/>
        <end position="269"/>
    </location>
</feature>
<name>CBRD_DICD3</name>
<dbReference type="EMBL" id="X87208">
    <property type="protein sequence ID" value="CAA60669.1"/>
    <property type="molecule type" value="Genomic_DNA"/>
</dbReference>
<dbReference type="EMBL" id="CP002038">
    <property type="protein sequence ID" value="ADM97840.1"/>
    <property type="molecule type" value="Genomic_DNA"/>
</dbReference>
<dbReference type="PIR" id="S54823">
    <property type="entry name" value="S54823"/>
</dbReference>
<dbReference type="RefSeq" id="WP_013317301.1">
    <property type="nucleotide sequence ID" value="NC_014500.1"/>
</dbReference>
<dbReference type="SMR" id="Q47087"/>
<dbReference type="STRING" id="198628.Dda3937_02845"/>
<dbReference type="TCDB" id="3.A.1.14.4">
    <property type="family name" value="the atp-binding cassette (abc) superfamily"/>
</dbReference>
<dbReference type="KEGG" id="ddd:Dda3937_02845"/>
<dbReference type="PATRIC" id="fig|198628.6.peg.1629"/>
<dbReference type="eggNOG" id="COG1120">
    <property type="taxonomic scope" value="Bacteria"/>
</dbReference>
<dbReference type="HOGENOM" id="CLU_000604_1_11_6"/>
<dbReference type="OrthoDB" id="5292475at2"/>
<dbReference type="Proteomes" id="UP000006859">
    <property type="component" value="Chromosome"/>
</dbReference>
<dbReference type="GO" id="GO:0005886">
    <property type="term" value="C:plasma membrane"/>
    <property type="evidence" value="ECO:0007669"/>
    <property type="project" value="UniProtKB-SubCell"/>
</dbReference>
<dbReference type="GO" id="GO:0005524">
    <property type="term" value="F:ATP binding"/>
    <property type="evidence" value="ECO:0007669"/>
    <property type="project" value="UniProtKB-KW"/>
</dbReference>
<dbReference type="GO" id="GO:0016887">
    <property type="term" value="F:ATP hydrolysis activity"/>
    <property type="evidence" value="ECO:0007669"/>
    <property type="project" value="InterPro"/>
</dbReference>
<dbReference type="GO" id="GO:0042935">
    <property type="term" value="P:achromobactin transport"/>
    <property type="evidence" value="ECO:0000315"/>
    <property type="project" value="ASAP"/>
</dbReference>
<dbReference type="CDD" id="cd03214">
    <property type="entry name" value="ABC_Iron-Siderophores_B12_Hemin"/>
    <property type="match status" value="1"/>
</dbReference>
<dbReference type="FunFam" id="3.40.50.300:FF:000134">
    <property type="entry name" value="Iron-enterobactin ABC transporter ATP-binding protein"/>
    <property type="match status" value="1"/>
</dbReference>
<dbReference type="Gene3D" id="3.40.50.300">
    <property type="entry name" value="P-loop containing nucleotide triphosphate hydrolases"/>
    <property type="match status" value="1"/>
</dbReference>
<dbReference type="InterPro" id="IPR003593">
    <property type="entry name" value="AAA+_ATPase"/>
</dbReference>
<dbReference type="InterPro" id="IPR003439">
    <property type="entry name" value="ABC_transporter-like_ATP-bd"/>
</dbReference>
<dbReference type="InterPro" id="IPR017871">
    <property type="entry name" value="ABC_transporter-like_CS"/>
</dbReference>
<dbReference type="InterPro" id="IPR027417">
    <property type="entry name" value="P-loop_NTPase"/>
</dbReference>
<dbReference type="InterPro" id="IPR051535">
    <property type="entry name" value="Siderophore_ABC-ATPase"/>
</dbReference>
<dbReference type="PANTHER" id="PTHR42771">
    <property type="entry name" value="IRON(3+)-HYDROXAMATE IMPORT ATP-BINDING PROTEIN FHUC"/>
    <property type="match status" value="1"/>
</dbReference>
<dbReference type="PANTHER" id="PTHR42771:SF2">
    <property type="entry name" value="IRON(3+)-HYDROXAMATE IMPORT ATP-BINDING PROTEIN FHUC"/>
    <property type="match status" value="1"/>
</dbReference>
<dbReference type="Pfam" id="PF00005">
    <property type="entry name" value="ABC_tran"/>
    <property type="match status" value="1"/>
</dbReference>
<dbReference type="SMART" id="SM00382">
    <property type="entry name" value="AAA"/>
    <property type="match status" value="1"/>
</dbReference>
<dbReference type="SUPFAM" id="SSF52540">
    <property type="entry name" value="P-loop containing nucleoside triphosphate hydrolases"/>
    <property type="match status" value="1"/>
</dbReference>
<dbReference type="PROSITE" id="PS00211">
    <property type="entry name" value="ABC_TRANSPORTER_1"/>
    <property type="match status" value="1"/>
</dbReference>
<dbReference type="PROSITE" id="PS50893">
    <property type="entry name" value="ABC_TRANSPORTER_2"/>
    <property type="match status" value="1"/>
</dbReference>
<gene>
    <name type="primary">cbrD</name>
    <name type="ordered locus">Dda3937_02845</name>
</gene>
<keyword id="KW-0067">ATP-binding</keyword>
<keyword id="KW-0997">Cell inner membrane</keyword>
<keyword id="KW-1003">Cell membrane</keyword>
<keyword id="KW-0406">Ion transport</keyword>
<keyword id="KW-0408">Iron</keyword>
<keyword id="KW-0410">Iron transport</keyword>
<keyword id="KW-0472">Membrane</keyword>
<keyword id="KW-0547">Nucleotide-binding</keyword>
<keyword id="KW-1185">Reference proteome</keyword>
<keyword id="KW-0813">Transport</keyword>
<comment type="function">
    <text>Part of the binding-protein-dependent transport system CbrABCD for uptake of the siderophore achromobactin. Probably responsible for energy coupling to the transport system.</text>
</comment>
<comment type="subcellular location">
    <subcellularLocation>
        <location>Cell inner membrane</location>
        <topology>Peripheral membrane protein</topology>
    </subcellularLocation>
</comment>
<comment type="similarity">
    <text evidence="2">Belongs to the ABC transporter superfamily.</text>
</comment>
<sequence>MTAITSRELTLGYASQTIIDNLDIQLPKGKVSVLIGSNGCGKSTLLKSFARLLKPLKGAVILNGEDIHRQSTAAVARELAILPQMPDAPEGITVKQLVSLGRYPYQNWLQQWSEQDEAMVNQALRQTGTDMLAERPVDALSGGQRQRVWIAMTLAQDTEVVLLDEPTTFLDLAHQIEVLDLLRELNRQHGKTIIMVLHDLNLACRYADHMVAVHNRTAFAQGAPAEILDEALVKTVFNLDCRIVPDPFFHTPLCIPFGREKPQERATVA</sequence>